<gene>
    <name type="primary">repL</name>
</gene>
<keyword id="KW-0235">DNA replication</keyword>
<keyword id="KW-0614">Plasmid</keyword>
<feature type="chain" id="PRO_0000068431" description="Replication and maintenance protein">
    <location>
        <begin position="1"/>
        <end position="146"/>
    </location>
</feature>
<organism>
    <name type="scientific">Bacillus subtilis</name>
    <dbReference type="NCBI Taxonomy" id="1423"/>
    <lineage>
        <taxon>Bacteria</taxon>
        <taxon>Bacillati</taxon>
        <taxon>Bacillota</taxon>
        <taxon>Bacilli</taxon>
        <taxon>Bacillales</taxon>
        <taxon>Bacillaceae</taxon>
        <taxon>Bacillus</taxon>
    </lineage>
</organism>
<geneLocation type="plasmid">
    <name>pIM13</name>
</geneLocation>
<sequence length="146" mass="16617">MKERYGTVYKGSQRLIDEESGEVIEVDKLYRKQTSGNFVKAYIVQLISMLDMIGGKKLKIVNYILDNVHLSNNTMIATTREIAKATGTSLQTVITTLKILEEGNIIKRKTGVLMLNPELLMRGDDQKQKYLLLEFGNFEQEANEID</sequence>
<accession>P13968</accession>
<protein>
    <recommendedName>
        <fullName>Replication and maintenance protein</fullName>
    </recommendedName>
    <alternativeName>
        <fullName>Plasmid replication protein</fullName>
    </alternativeName>
</protein>
<name>REPLM_BACIU</name>
<dbReference type="EMBL" id="M13761">
    <property type="protein sequence ID" value="AAA98135.1"/>
    <property type="molecule type" value="Genomic_DNA"/>
</dbReference>
<dbReference type="PIR" id="A25233">
    <property type="entry name" value="A25233"/>
</dbReference>
<dbReference type="RefSeq" id="NP_040406.1">
    <property type="nucleotide sequence ID" value="NC_001376.1"/>
</dbReference>
<dbReference type="RefSeq" id="WP_010889898.1">
    <property type="nucleotide sequence ID" value="NC_001376.1"/>
</dbReference>
<dbReference type="SMR" id="P13968"/>
<dbReference type="GO" id="GO:0003677">
    <property type="term" value="F:DNA binding"/>
    <property type="evidence" value="ECO:0007669"/>
    <property type="project" value="InterPro"/>
</dbReference>
<dbReference type="GO" id="GO:0006260">
    <property type="term" value="P:DNA replication"/>
    <property type="evidence" value="ECO:0007669"/>
    <property type="project" value="UniProtKB-KW"/>
</dbReference>
<dbReference type="GO" id="GO:0006276">
    <property type="term" value="P:plasmid maintenance"/>
    <property type="evidence" value="ECO:0007669"/>
    <property type="project" value="InterPro"/>
</dbReference>
<dbReference type="GO" id="GO:0006355">
    <property type="term" value="P:regulation of DNA-templated transcription"/>
    <property type="evidence" value="ECO:0007669"/>
    <property type="project" value="InterPro"/>
</dbReference>
<dbReference type="CDD" id="cd00092">
    <property type="entry name" value="HTH_CRP"/>
    <property type="match status" value="1"/>
</dbReference>
<dbReference type="Gene3D" id="1.10.10.10">
    <property type="entry name" value="Winged helix-like DNA-binding domain superfamily/Winged helix DNA-binding domain"/>
    <property type="match status" value="1"/>
</dbReference>
<dbReference type="InterPro" id="IPR012318">
    <property type="entry name" value="HTH_CRP"/>
</dbReference>
<dbReference type="InterPro" id="IPR008813">
    <property type="entry name" value="Plasmid_replication_RepL"/>
</dbReference>
<dbReference type="InterPro" id="IPR036388">
    <property type="entry name" value="WH-like_DNA-bd_sf"/>
</dbReference>
<dbReference type="InterPro" id="IPR036390">
    <property type="entry name" value="WH_DNA-bd_sf"/>
</dbReference>
<dbReference type="Pfam" id="PF05732">
    <property type="entry name" value="RepL"/>
    <property type="match status" value="1"/>
</dbReference>
<dbReference type="SMART" id="SM00419">
    <property type="entry name" value="HTH_CRP"/>
    <property type="match status" value="1"/>
</dbReference>
<dbReference type="SUPFAM" id="SSF46785">
    <property type="entry name" value="Winged helix' DNA-binding domain"/>
    <property type="match status" value="1"/>
</dbReference>
<reference key="1">
    <citation type="journal article" date="1986" name="J. Bacteriol.">
        <title>Sequence and properties of pIM13, a macrolide-lincosamide-streptogramin B resistance plasmid from Bacillus subtilis.</title>
        <authorList>
            <person name="Monod M."/>
            <person name="Denoya C."/>
            <person name="Dubnau D."/>
        </authorList>
    </citation>
    <scope>NUCLEOTIDE SEQUENCE [GENOMIC DNA]</scope>
</reference>
<proteinExistence type="predicted"/>